<feature type="chain" id="PRO_1000018211" description="Tryptophan synthase alpha chain">
    <location>
        <begin position="1"/>
        <end position="268"/>
    </location>
</feature>
<feature type="active site" description="Proton acceptor" evidence="1">
    <location>
        <position position="49"/>
    </location>
</feature>
<feature type="active site" description="Proton acceptor" evidence="1">
    <location>
        <position position="60"/>
    </location>
</feature>
<sequence length="268" mass="28699">MSRFETQFATLNAKNEGAFVPFVTLCDPTFDCSFEIICTLVDNGADALELGFPFSDPLLDGPVIQAANNRALTAGHSSEDSFKLLEKVRSKYPEIPISLLLCANLIFAKGLDAFYQRCAEVGVDAVLVADIPLLAKEDYVQAAKKHGIQPVFICPPNADEKTIQGVAKNSEGYTYLVSRAGVTSAENQAHAANLDTLVEQLKAHYAPPILQGFGIAQPAQVKEALALGAAGAISGSATVKIIERNLDNHEQCLAELAEFVQTMKAATK</sequence>
<proteinExistence type="inferred from homology"/>
<name>TRPA_HAEI8</name>
<reference key="1">
    <citation type="journal article" date="2005" name="J. Bacteriol.">
        <title>Genomic sequence of an otitis media isolate of nontypeable Haemophilus influenzae: comparative study with H. influenzae serotype d, strain KW20.</title>
        <authorList>
            <person name="Harrison A."/>
            <person name="Dyer D.W."/>
            <person name="Gillaspy A."/>
            <person name="Ray W.C."/>
            <person name="Mungur R."/>
            <person name="Carson M.B."/>
            <person name="Zhong H."/>
            <person name="Gipson J."/>
            <person name="Gipson M."/>
            <person name="Johnson L.S."/>
            <person name="Lewis L."/>
            <person name="Bakaletz L.O."/>
            <person name="Munson R.S. Jr."/>
        </authorList>
    </citation>
    <scope>NUCLEOTIDE SEQUENCE [LARGE SCALE GENOMIC DNA]</scope>
    <source>
        <strain>86-028NP</strain>
    </source>
</reference>
<evidence type="ECO:0000255" key="1">
    <source>
        <dbReference type="HAMAP-Rule" id="MF_00131"/>
    </source>
</evidence>
<protein>
    <recommendedName>
        <fullName evidence="1">Tryptophan synthase alpha chain</fullName>
        <ecNumber evidence="1">4.2.1.20</ecNumber>
    </recommendedName>
</protein>
<organism>
    <name type="scientific">Haemophilus influenzae (strain 86-028NP)</name>
    <dbReference type="NCBI Taxonomy" id="281310"/>
    <lineage>
        <taxon>Bacteria</taxon>
        <taxon>Pseudomonadati</taxon>
        <taxon>Pseudomonadota</taxon>
        <taxon>Gammaproteobacteria</taxon>
        <taxon>Pasteurellales</taxon>
        <taxon>Pasteurellaceae</taxon>
        <taxon>Haemophilus</taxon>
    </lineage>
</organism>
<accession>Q4QKF6</accession>
<dbReference type="EC" id="4.2.1.20" evidence="1"/>
<dbReference type="EMBL" id="CP000057">
    <property type="protein sequence ID" value="AAX88491.1"/>
    <property type="molecule type" value="Genomic_DNA"/>
</dbReference>
<dbReference type="RefSeq" id="WP_005660361.1">
    <property type="nucleotide sequence ID" value="NC_007146.2"/>
</dbReference>
<dbReference type="SMR" id="Q4QKF6"/>
<dbReference type="GeneID" id="93220425"/>
<dbReference type="KEGG" id="hit:NTHI1701"/>
<dbReference type="HOGENOM" id="CLU_016734_0_4_6"/>
<dbReference type="UniPathway" id="UPA00035">
    <property type="reaction ID" value="UER00044"/>
</dbReference>
<dbReference type="Proteomes" id="UP000002525">
    <property type="component" value="Chromosome"/>
</dbReference>
<dbReference type="GO" id="GO:0005829">
    <property type="term" value="C:cytosol"/>
    <property type="evidence" value="ECO:0007669"/>
    <property type="project" value="TreeGrafter"/>
</dbReference>
<dbReference type="GO" id="GO:0004834">
    <property type="term" value="F:tryptophan synthase activity"/>
    <property type="evidence" value="ECO:0007669"/>
    <property type="project" value="UniProtKB-UniRule"/>
</dbReference>
<dbReference type="CDD" id="cd04724">
    <property type="entry name" value="Tryptophan_synthase_alpha"/>
    <property type="match status" value="1"/>
</dbReference>
<dbReference type="FunFam" id="3.20.20.70:FF:000037">
    <property type="entry name" value="Tryptophan synthase alpha chain"/>
    <property type="match status" value="1"/>
</dbReference>
<dbReference type="Gene3D" id="3.20.20.70">
    <property type="entry name" value="Aldolase class I"/>
    <property type="match status" value="1"/>
</dbReference>
<dbReference type="HAMAP" id="MF_00131">
    <property type="entry name" value="Trp_synth_alpha"/>
    <property type="match status" value="1"/>
</dbReference>
<dbReference type="InterPro" id="IPR013785">
    <property type="entry name" value="Aldolase_TIM"/>
</dbReference>
<dbReference type="InterPro" id="IPR011060">
    <property type="entry name" value="RibuloseP-bd_barrel"/>
</dbReference>
<dbReference type="InterPro" id="IPR018204">
    <property type="entry name" value="Trp_synthase_alpha_AS"/>
</dbReference>
<dbReference type="InterPro" id="IPR002028">
    <property type="entry name" value="Trp_synthase_suA"/>
</dbReference>
<dbReference type="NCBIfam" id="TIGR00262">
    <property type="entry name" value="trpA"/>
    <property type="match status" value="1"/>
</dbReference>
<dbReference type="PANTHER" id="PTHR43406:SF1">
    <property type="entry name" value="TRYPTOPHAN SYNTHASE ALPHA CHAIN, CHLOROPLASTIC"/>
    <property type="match status" value="1"/>
</dbReference>
<dbReference type="PANTHER" id="PTHR43406">
    <property type="entry name" value="TRYPTOPHAN SYNTHASE, ALPHA CHAIN"/>
    <property type="match status" value="1"/>
</dbReference>
<dbReference type="Pfam" id="PF00290">
    <property type="entry name" value="Trp_syntA"/>
    <property type="match status" value="1"/>
</dbReference>
<dbReference type="SUPFAM" id="SSF51366">
    <property type="entry name" value="Ribulose-phoshate binding barrel"/>
    <property type="match status" value="1"/>
</dbReference>
<dbReference type="PROSITE" id="PS00167">
    <property type="entry name" value="TRP_SYNTHASE_ALPHA"/>
    <property type="match status" value="1"/>
</dbReference>
<keyword id="KW-0028">Amino-acid biosynthesis</keyword>
<keyword id="KW-0057">Aromatic amino acid biosynthesis</keyword>
<keyword id="KW-0456">Lyase</keyword>
<keyword id="KW-0822">Tryptophan biosynthesis</keyword>
<gene>
    <name evidence="1" type="primary">trpA</name>
    <name type="ordered locus">NTHI1701</name>
</gene>
<comment type="function">
    <text evidence="1">The alpha subunit is responsible for the aldol cleavage of indoleglycerol phosphate to indole and glyceraldehyde 3-phosphate.</text>
</comment>
<comment type="catalytic activity">
    <reaction evidence="1">
        <text>(1S,2R)-1-C-(indol-3-yl)glycerol 3-phosphate + L-serine = D-glyceraldehyde 3-phosphate + L-tryptophan + H2O</text>
        <dbReference type="Rhea" id="RHEA:10532"/>
        <dbReference type="ChEBI" id="CHEBI:15377"/>
        <dbReference type="ChEBI" id="CHEBI:33384"/>
        <dbReference type="ChEBI" id="CHEBI:57912"/>
        <dbReference type="ChEBI" id="CHEBI:58866"/>
        <dbReference type="ChEBI" id="CHEBI:59776"/>
        <dbReference type="EC" id="4.2.1.20"/>
    </reaction>
</comment>
<comment type="pathway">
    <text evidence="1">Amino-acid biosynthesis; L-tryptophan biosynthesis; L-tryptophan from chorismate: step 5/5.</text>
</comment>
<comment type="subunit">
    <text evidence="1">Tetramer of two alpha and two beta chains.</text>
</comment>
<comment type="similarity">
    <text evidence="1">Belongs to the TrpA family.</text>
</comment>